<name>CUP6H_CORGL</name>
<evidence type="ECO:0000250" key="1">
    <source>
        <dbReference type="UniProtKB" id="O53581"/>
    </source>
</evidence>
<evidence type="ECO:0000255" key="2"/>
<evidence type="ECO:0000269" key="3">
    <source>
    </source>
</evidence>
<evidence type="ECO:0000305" key="4"/>
<evidence type="ECO:0000312" key="5">
    <source>
        <dbReference type="EMBL" id="BAC00267.1"/>
    </source>
</evidence>
<reference key="1">
    <citation type="journal article" date="2003" name="Appl. Microbiol. Biotechnol.">
        <title>The Corynebacterium glutamicum genome: features and impacts on biotechnological processes.</title>
        <authorList>
            <person name="Ikeda M."/>
            <person name="Nakagawa S."/>
        </authorList>
    </citation>
    <scope>NUCLEOTIDE SEQUENCE [LARGE SCALE GENOMIC DNA]</scope>
    <source>
        <strain>ATCC 13032 / DSM 20300 / JCM 1318 / BCRC 11384 / CCUG 27702 / LMG 3730 / NBRC 12168 / NCIMB 10025 / NRRL B-2784 / 534</strain>
    </source>
</reference>
<reference key="2">
    <citation type="journal article" date="2010" name="J. Biol. Chem.">
        <title>Tetrahydrolipstatin inhibition, functional analyses, and three-dimensional structure of a lipase essential for mycobacterial viability.</title>
        <authorList>
            <person name="Crellin P.K."/>
            <person name="Vivian J.P."/>
            <person name="Scoble J."/>
            <person name="Chow F.M."/>
            <person name="West N.P."/>
            <person name="Brammananth R."/>
            <person name="Proellocks N.I."/>
            <person name="Shahine A."/>
            <person name="Le Nours J."/>
            <person name="Wilce M.C."/>
            <person name="Britton W.J."/>
            <person name="Coppel R.L."/>
            <person name="Rossjohn J."/>
            <person name="Beddoe T."/>
        </authorList>
    </citation>
    <scope>FUNCTION</scope>
    <scope>CATALYTIC ACTIVITY</scope>
    <scope>ACTIVITY REGULATION</scope>
    <scope>BIOPHYSICOCHEMICAL PROPERTIES</scope>
    <source>
        <strain>ATCC 13032 / DSM 20300 / JCM 1318 / BCRC 11384 / CCUG 27702 / LMG 3730 / NBRC 12168 / NCIMB 10025 / NRRL B-2784 / 534</strain>
    </source>
</reference>
<sequence>MRKTITVIAVLIVLALIGVGIVQYVNTSDDSDFIGQPGEPTGTETTEPPVQPDWCPAVEVIAAPGTWESAANDDPINPTANPLSFMLSITQPLQERYSADDVKVWTLPYTAQFRNINSQNEMSYDDSRNEGTAKMNEELINTHNECPATEFIIVGFSQGAVIAGDVAAQIGSEQGVIPADSVRGVALIADGRREPGVGQFPGTFVDGIGAEVTLQPLNLLVQPIVPGATMRGGRAGGFGVLNDRVQDICAPNDAICDAPVNVGNALDRALAMVSANGVHALYATNPDVFPGTTTNAWVVDWATNLIDNG</sequence>
<accession>Q8NLR5</accession>
<accession>Q6M1Y5</accession>
<gene>
    <name evidence="5" type="ordered locus">Cgl2873</name>
</gene>
<organism>
    <name type="scientific">Corynebacterium glutamicum (strain ATCC 13032 / DSM 20300 / JCM 1318 / BCRC 11384 / CCUG 27702 / LMG 3730 / NBRC 12168 / NCIMB 10025 / NRRL B-2784 / 534)</name>
    <dbReference type="NCBI Taxonomy" id="196627"/>
    <lineage>
        <taxon>Bacteria</taxon>
        <taxon>Bacillati</taxon>
        <taxon>Actinomycetota</taxon>
        <taxon>Actinomycetes</taxon>
        <taxon>Mycobacteriales</taxon>
        <taxon>Corynebacteriaceae</taxon>
        <taxon>Corynebacterium</taxon>
    </lineage>
</organism>
<proteinExistence type="evidence at protein level"/>
<feature type="chain" id="PRO_0000450110" description="Carboxylesterase Culp6 homolog">
    <location>
        <begin position="1"/>
        <end position="309"/>
    </location>
</feature>
<feature type="transmembrane region" description="Helical" evidence="2">
    <location>
        <begin position="5"/>
        <end position="25"/>
    </location>
</feature>
<feature type="active site" evidence="1">
    <location>
        <position position="157"/>
    </location>
</feature>
<feature type="active site" evidence="1">
    <location>
        <position position="253"/>
    </location>
</feature>
<feature type="active site" evidence="1">
    <location>
        <position position="279"/>
    </location>
</feature>
<feature type="disulfide bond" evidence="1">
    <location>
        <begin position="55"/>
        <end position="146"/>
    </location>
</feature>
<feature type="disulfide bond" evidence="1">
    <location>
        <begin position="249"/>
        <end position="256"/>
    </location>
</feature>
<keyword id="KW-1003">Cell membrane</keyword>
<keyword id="KW-1015">Disulfide bond</keyword>
<keyword id="KW-0378">Hydrolase</keyword>
<keyword id="KW-0472">Membrane</keyword>
<keyword id="KW-1185">Reference proteome</keyword>
<keyword id="KW-0719">Serine esterase</keyword>
<keyword id="KW-0812">Transmembrane</keyword>
<keyword id="KW-1133">Transmembrane helix</keyword>
<comment type="function">
    <text evidence="3">Esterase that may be involved in cell wall biosynthesis and/or maintenance. Hydrolyzes pNP-butyrate (C4).</text>
</comment>
<comment type="catalytic activity">
    <reaction evidence="3">
        <text>a butanoate ester + H2O = an aliphatic alcohol + butanoate + H(+)</text>
        <dbReference type="Rhea" id="RHEA:47348"/>
        <dbReference type="ChEBI" id="CHEBI:2571"/>
        <dbReference type="ChEBI" id="CHEBI:15377"/>
        <dbReference type="ChEBI" id="CHEBI:15378"/>
        <dbReference type="ChEBI" id="CHEBI:17968"/>
        <dbReference type="ChEBI" id="CHEBI:50477"/>
    </reaction>
</comment>
<comment type="activity regulation">
    <text evidence="3">Inhibited by tetrahydrolipstatin (THL), a specific lipase inhibitor.</text>
</comment>
<comment type="biophysicochemical properties">
    <kinetics>
        <KM evidence="3">4.71 mM for pNP-butyrate</KM>
        <Vmax evidence="3">273.0 nmol/min/mg enzyme with pNP-butyrate as substrate</Vmax>
        <text evidence="3">kcat is 0.146 sec(-1) with pNP-butyrate as substrate.</text>
    </kinetics>
</comment>
<comment type="subcellular location">
    <subcellularLocation>
        <location evidence="4">Cell membrane</location>
        <topology evidence="2">Single-pass membrane protein</topology>
    </subcellularLocation>
</comment>
<comment type="similarity">
    <text evidence="4">Belongs to the cutinase family.</text>
</comment>
<protein>
    <recommendedName>
        <fullName evidence="4">Carboxylesterase Culp6 homolog</fullName>
        <ecNumber evidence="3">3.1.1.-</ecNumber>
    </recommendedName>
</protein>
<dbReference type="EC" id="3.1.1.-" evidence="3"/>
<dbReference type="EMBL" id="BA000036">
    <property type="protein sequence ID" value="BAC00267.1"/>
    <property type="molecule type" value="Genomic_DNA"/>
</dbReference>
<dbReference type="RefSeq" id="NP_602065.1">
    <property type="nucleotide sequence ID" value="NC_003450.3"/>
</dbReference>
<dbReference type="RefSeq" id="WP_011015453.1">
    <property type="nucleotide sequence ID" value="NC_006958.1"/>
</dbReference>
<dbReference type="SMR" id="Q8NLR5"/>
<dbReference type="STRING" id="196627.cg3180"/>
<dbReference type="ESTHER" id="corgl-q8nlr5">
    <property type="family name" value="Cutinase"/>
</dbReference>
<dbReference type="KEGG" id="cgb:cg3180"/>
<dbReference type="KEGG" id="cgl:Cgl2873"/>
<dbReference type="PATRIC" id="fig|196627.13.peg.2805"/>
<dbReference type="eggNOG" id="COG4223">
    <property type="taxonomic scope" value="Bacteria"/>
</dbReference>
<dbReference type="HOGENOM" id="CLU_882318_0_0_11"/>
<dbReference type="OrthoDB" id="4423762at2"/>
<dbReference type="BioCyc" id="CORYNE:G18NG-12491-MONOMER"/>
<dbReference type="Proteomes" id="UP000000582">
    <property type="component" value="Chromosome"/>
</dbReference>
<dbReference type="GO" id="GO:0005886">
    <property type="term" value="C:plasma membrane"/>
    <property type="evidence" value="ECO:0007669"/>
    <property type="project" value="UniProtKB-SubCell"/>
</dbReference>
<dbReference type="GO" id="GO:0052689">
    <property type="term" value="F:carboxylic ester hydrolase activity"/>
    <property type="evidence" value="ECO:0007669"/>
    <property type="project" value="UniProtKB-KW"/>
</dbReference>
<dbReference type="Gene3D" id="3.40.50.1820">
    <property type="entry name" value="alpha/beta hydrolase"/>
    <property type="match status" value="1"/>
</dbReference>
<dbReference type="InterPro" id="IPR029058">
    <property type="entry name" value="AB_hydrolase_fold"/>
</dbReference>
<dbReference type="InterPro" id="IPR000675">
    <property type="entry name" value="Cutinase/axe"/>
</dbReference>
<dbReference type="PANTHER" id="PTHR33630:SF9">
    <property type="entry name" value="CUTINASE 4"/>
    <property type="match status" value="1"/>
</dbReference>
<dbReference type="PANTHER" id="PTHR33630">
    <property type="entry name" value="CUTINASE RV1984C-RELATED-RELATED"/>
    <property type="match status" value="1"/>
</dbReference>
<dbReference type="Pfam" id="PF01083">
    <property type="entry name" value="Cutinase"/>
    <property type="match status" value="1"/>
</dbReference>
<dbReference type="SMART" id="SM01110">
    <property type="entry name" value="Cutinase"/>
    <property type="match status" value="1"/>
</dbReference>
<dbReference type="SUPFAM" id="SSF53474">
    <property type="entry name" value="alpha/beta-Hydrolases"/>
    <property type="match status" value="1"/>
</dbReference>